<name>PDLI2_MACFA</name>
<comment type="function">
    <text evidence="1">Probable adapter protein located at the actin cytoskeleton that promotes cell attachment. Necessary for the migratory capacity of epithelial cells. Overexpression enhances cell adhesion to collagen and fibronectin and suppresses anchorage independent growth. May contribute to tumor cell migratory capacity (By similarity).</text>
</comment>
<comment type="subunit">
    <text evidence="2 3">Interacts with alpha-actinins ACTN1 and ACTN4, FLNA and MYH9 (By similarity). Interacts (via LIM zinc-binding domain) with MKRN2 (By similarity).</text>
</comment>
<comment type="subcellular location">
    <subcellularLocation>
        <location>Cytoplasm</location>
    </subcellularLocation>
    <subcellularLocation>
        <location>Cytoplasm</location>
        <location>Cytoskeleton</location>
    </subcellularLocation>
    <text evidence="1">Localizes at the cytoskeleton. Colocalizes with beta-1 integrin (ITGB1) and alpha-actinin but not with paxillin (PXN) (By similarity).</text>
</comment>
<protein>
    <recommendedName>
        <fullName>PDZ and LIM domain protein 2</fullName>
    </recommendedName>
</protein>
<sequence length="352" mass="37392">MALTVDVAGPAPWGFRITGGRDFHTPIMVTKVAERGKAKDADLRPGDIIVAINGESAEGMLHAEAQSKIRQSPSPLRLQLDRSQAASPGQTNGDSSLEVLATRFQGSVRTHTESHSSLRSSYSSPTSLSPRAGSPFSPPPFSSPLAGEAAISRSFQSLACSPGLPAADRLSYSGRPGSQQAGLGRAGDSAVLVLPPSPGPRSSRPSVDSEGGSLLLDEDSEVFKMLQENREGRAAPRQSSSFRLLQEALEAEERGGTPAFLPSSLSPQSSLPASRALATPPKLHTCEKCSTSIANQAVRIQEGRYRHPGCYTCADCGLNLKMRGHFWVGDELYCEKHARQRYSAPATLSSRA</sequence>
<accession>Q9GKU1</accession>
<organism>
    <name type="scientific">Macaca fascicularis</name>
    <name type="common">Crab-eating macaque</name>
    <name type="synonym">Cynomolgus monkey</name>
    <dbReference type="NCBI Taxonomy" id="9541"/>
    <lineage>
        <taxon>Eukaryota</taxon>
        <taxon>Metazoa</taxon>
        <taxon>Chordata</taxon>
        <taxon>Craniata</taxon>
        <taxon>Vertebrata</taxon>
        <taxon>Euteleostomi</taxon>
        <taxon>Mammalia</taxon>
        <taxon>Eutheria</taxon>
        <taxon>Euarchontoglires</taxon>
        <taxon>Primates</taxon>
        <taxon>Haplorrhini</taxon>
        <taxon>Catarrhini</taxon>
        <taxon>Cercopithecidae</taxon>
        <taxon>Cercopithecinae</taxon>
        <taxon>Macaca</taxon>
    </lineage>
</organism>
<keyword id="KW-0963">Cytoplasm</keyword>
<keyword id="KW-0206">Cytoskeleton</keyword>
<keyword id="KW-0440">LIM domain</keyword>
<keyword id="KW-0479">Metal-binding</keyword>
<keyword id="KW-0597">Phosphoprotein</keyword>
<keyword id="KW-1185">Reference proteome</keyword>
<keyword id="KW-0862">Zinc</keyword>
<dbReference type="EMBL" id="AB052137">
    <property type="protein sequence ID" value="BAB18991.1"/>
    <property type="molecule type" value="mRNA"/>
</dbReference>
<dbReference type="SMR" id="Q9GKU1"/>
<dbReference type="STRING" id="9541.ENSMFAP00000018886"/>
<dbReference type="eggNOG" id="KOG1703">
    <property type="taxonomic scope" value="Eukaryota"/>
</dbReference>
<dbReference type="Proteomes" id="UP000233100">
    <property type="component" value="Unplaced"/>
</dbReference>
<dbReference type="GO" id="GO:0005912">
    <property type="term" value="C:adherens junction"/>
    <property type="evidence" value="ECO:0007669"/>
    <property type="project" value="TreeGrafter"/>
</dbReference>
<dbReference type="GO" id="GO:0031941">
    <property type="term" value="C:filamentous actin"/>
    <property type="evidence" value="ECO:0007669"/>
    <property type="project" value="TreeGrafter"/>
</dbReference>
<dbReference type="GO" id="GO:0001725">
    <property type="term" value="C:stress fiber"/>
    <property type="evidence" value="ECO:0007669"/>
    <property type="project" value="TreeGrafter"/>
</dbReference>
<dbReference type="GO" id="GO:0030018">
    <property type="term" value="C:Z disc"/>
    <property type="evidence" value="ECO:0007669"/>
    <property type="project" value="TreeGrafter"/>
</dbReference>
<dbReference type="GO" id="GO:0003779">
    <property type="term" value="F:actin binding"/>
    <property type="evidence" value="ECO:0007669"/>
    <property type="project" value="TreeGrafter"/>
</dbReference>
<dbReference type="GO" id="GO:0046872">
    <property type="term" value="F:metal ion binding"/>
    <property type="evidence" value="ECO:0007669"/>
    <property type="project" value="UniProtKB-KW"/>
</dbReference>
<dbReference type="GO" id="GO:0051371">
    <property type="term" value="F:muscle alpha-actinin binding"/>
    <property type="evidence" value="ECO:0007669"/>
    <property type="project" value="TreeGrafter"/>
</dbReference>
<dbReference type="GO" id="GO:0030036">
    <property type="term" value="P:actin cytoskeleton organization"/>
    <property type="evidence" value="ECO:0007669"/>
    <property type="project" value="TreeGrafter"/>
</dbReference>
<dbReference type="GO" id="GO:0007507">
    <property type="term" value="P:heart development"/>
    <property type="evidence" value="ECO:0007669"/>
    <property type="project" value="TreeGrafter"/>
</dbReference>
<dbReference type="GO" id="GO:0061061">
    <property type="term" value="P:muscle structure development"/>
    <property type="evidence" value="ECO:0007669"/>
    <property type="project" value="TreeGrafter"/>
</dbReference>
<dbReference type="CDD" id="cd09449">
    <property type="entry name" value="LIM_Mystique"/>
    <property type="match status" value="1"/>
</dbReference>
<dbReference type="CDD" id="cd06753">
    <property type="entry name" value="PDZ_PDLIM-like"/>
    <property type="match status" value="1"/>
</dbReference>
<dbReference type="FunFam" id="2.10.110.10:FF:000085">
    <property type="entry name" value="PDZ and LIM domain 2 (mystique)"/>
    <property type="match status" value="1"/>
</dbReference>
<dbReference type="FunFam" id="2.30.42.10:FF:000130">
    <property type="entry name" value="PDZ and LIM domain 2 (mystique)"/>
    <property type="match status" value="1"/>
</dbReference>
<dbReference type="Gene3D" id="2.30.42.10">
    <property type="match status" value="1"/>
</dbReference>
<dbReference type="Gene3D" id="2.10.110.10">
    <property type="entry name" value="Cysteine Rich Protein"/>
    <property type="match status" value="1"/>
</dbReference>
<dbReference type="InterPro" id="IPR031847">
    <property type="entry name" value="PDLI1-4/Zasp-like_mid"/>
</dbReference>
<dbReference type="InterPro" id="IPR001478">
    <property type="entry name" value="PDZ"/>
</dbReference>
<dbReference type="InterPro" id="IPR050604">
    <property type="entry name" value="PDZ-LIM_domain"/>
</dbReference>
<dbReference type="InterPro" id="IPR036034">
    <property type="entry name" value="PDZ_sf"/>
</dbReference>
<dbReference type="InterPro" id="IPR001781">
    <property type="entry name" value="Znf_LIM"/>
</dbReference>
<dbReference type="PANTHER" id="PTHR24214:SF1">
    <property type="entry name" value="PDZ AND LIM DOMAIN PROTEIN 2"/>
    <property type="match status" value="1"/>
</dbReference>
<dbReference type="PANTHER" id="PTHR24214">
    <property type="entry name" value="PDZ AND LIM DOMAIN PROTEIN ZASP"/>
    <property type="match status" value="1"/>
</dbReference>
<dbReference type="Pfam" id="PF15936">
    <property type="entry name" value="DUF4749"/>
    <property type="match status" value="1"/>
</dbReference>
<dbReference type="Pfam" id="PF00412">
    <property type="entry name" value="LIM"/>
    <property type="match status" value="1"/>
</dbReference>
<dbReference type="Pfam" id="PF00595">
    <property type="entry name" value="PDZ"/>
    <property type="match status" value="1"/>
</dbReference>
<dbReference type="SMART" id="SM00132">
    <property type="entry name" value="LIM"/>
    <property type="match status" value="1"/>
</dbReference>
<dbReference type="SMART" id="SM00228">
    <property type="entry name" value="PDZ"/>
    <property type="match status" value="1"/>
</dbReference>
<dbReference type="SUPFAM" id="SSF57716">
    <property type="entry name" value="Glucocorticoid receptor-like (DNA-binding domain)"/>
    <property type="match status" value="1"/>
</dbReference>
<dbReference type="SUPFAM" id="SSF50156">
    <property type="entry name" value="PDZ domain-like"/>
    <property type="match status" value="1"/>
</dbReference>
<dbReference type="PROSITE" id="PS00478">
    <property type="entry name" value="LIM_DOMAIN_1"/>
    <property type="match status" value="1"/>
</dbReference>
<dbReference type="PROSITE" id="PS50023">
    <property type="entry name" value="LIM_DOMAIN_2"/>
    <property type="match status" value="1"/>
</dbReference>
<dbReference type="PROSITE" id="PS50106">
    <property type="entry name" value="PDZ"/>
    <property type="match status" value="1"/>
</dbReference>
<proteinExistence type="evidence at transcript level"/>
<gene>
    <name type="primary">PDLIM2</name>
    <name type="ORF">QccE-18810</name>
</gene>
<feature type="chain" id="PRO_0000075863" description="PDZ and LIM domain protein 2">
    <location>
        <begin position="1"/>
        <end position="352"/>
    </location>
</feature>
<feature type="domain" description="PDZ" evidence="6">
    <location>
        <begin position="1"/>
        <end position="84"/>
    </location>
</feature>
<feature type="domain" description="LIM zinc-binding" evidence="5">
    <location>
        <begin position="284"/>
        <end position="344"/>
    </location>
</feature>
<feature type="region of interest" description="Disordered" evidence="7">
    <location>
        <begin position="69"/>
        <end position="95"/>
    </location>
</feature>
<feature type="region of interest" description="Disordered" evidence="7">
    <location>
        <begin position="108"/>
        <end position="141"/>
    </location>
</feature>
<feature type="region of interest" description="Disordered" evidence="7">
    <location>
        <begin position="170"/>
        <end position="214"/>
    </location>
</feature>
<feature type="region of interest" description="Disordered" evidence="7">
    <location>
        <begin position="253"/>
        <end position="275"/>
    </location>
</feature>
<feature type="compositionally biased region" description="Polar residues" evidence="7">
    <location>
        <begin position="81"/>
        <end position="95"/>
    </location>
</feature>
<feature type="compositionally biased region" description="Low complexity" evidence="7">
    <location>
        <begin position="117"/>
        <end position="135"/>
    </location>
</feature>
<feature type="compositionally biased region" description="Low complexity" evidence="7">
    <location>
        <begin position="258"/>
        <end position="275"/>
    </location>
</feature>
<feature type="modified residue" description="Phosphoserine" evidence="4">
    <location>
        <position position="124"/>
    </location>
</feature>
<feature type="modified residue" description="Phosphothreonine" evidence="4">
    <location>
        <position position="126"/>
    </location>
</feature>
<feature type="modified residue" description="Phosphoserine" evidence="3">
    <location>
        <position position="127"/>
    </location>
</feature>
<feature type="modified residue" description="Phosphoserine" evidence="4">
    <location>
        <position position="129"/>
    </location>
</feature>
<feature type="modified residue" description="Phosphoserine" evidence="3">
    <location>
        <position position="134"/>
    </location>
</feature>
<feature type="modified residue" description="Phosphoserine" evidence="4">
    <location>
        <position position="137"/>
    </location>
</feature>
<feature type="modified residue" description="Phosphoserine" evidence="3">
    <location>
        <position position="143"/>
    </location>
</feature>
<feature type="modified residue" description="Phosphoserine" evidence="4">
    <location>
        <position position="161"/>
    </location>
</feature>
<feature type="modified residue" description="Phosphoserine" evidence="4">
    <location>
        <position position="197"/>
    </location>
</feature>
<feature type="modified residue" description="Phosphoserine" evidence="3">
    <location>
        <position position="203"/>
    </location>
</feature>
<feature type="modified residue" description="Phosphoserine" evidence="2">
    <location>
        <position position="213"/>
    </location>
</feature>
<feature type="modified residue" description="Phosphoserine" evidence="2">
    <location>
        <position position="266"/>
    </location>
</feature>
<reference key="1">
    <citation type="submission" date="2000-12" db="EMBL/GenBank/DDBJ databases">
        <title>Isolation of full-length cDNA clones from macaque brain cDNA libraries.</title>
        <authorList>
            <person name="Osada N."/>
            <person name="Hida M."/>
            <person name="Kusuda J."/>
            <person name="Tanuma R."/>
            <person name="Iseki K."/>
            <person name="Hirai M."/>
            <person name="Terao K."/>
            <person name="Suzuki Y."/>
            <person name="Sugano S."/>
            <person name="Hashimoto K."/>
        </authorList>
    </citation>
    <scope>NUCLEOTIDE SEQUENCE [LARGE SCALE MRNA]</scope>
    <source>
        <tissue>Brain cortex</tissue>
    </source>
</reference>
<evidence type="ECO:0000250" key="1"/>
<evidence type="ECO:0000250" key="2">
    <source>
        <dbReference type="UniProtKB" id="Q6AYD6"/>
    </source>
</evidence>
<evidence type="ECO:0000250" key="3">
    <source>
        <dbReference type="UniProtKB" id="Q8R1G6"/>
    </source>
</evidence>
<evidence type="ECO:0000250" key="4">
    <source>
        <dbReference type="UniProtKB" id="Q96JY6"/>
    </source>
</evidence>
<evidence type="ECO:0000255" key="5">
    <source>
        <dbReference type="PROSITE-ProRule" id="PRU00125"/>
    </source>
</evidence>
<evidence type="ECO:0000255" key="6">
    <source>
        <dbReference type="PROSITE-ProRule" id="PRU00143"/>
    </source>
</evidence>
<evidence type="ECO:0000256" key="7">
    <source>
        <dbReference type="SAM" id="MobiDB-lite"/>
    </source>
</evidence>